<protein>
    <recommendedName>
        <fullName evidence="1">Chromosomal replication initiator protein DnaA</fullName>
    </recommendedName>
</protein>
<organism>
    <name type="scientific">Acinetobacter baumannii (strain ACICU)</name>
    <dbReference type="NCBI Taxonomy" id="405416"/>
    <lineage>
        <taxon>Bacteria</taxon>
        <taxon>Pseudomonadati</taxon>
        <taxon>Pseudomonadota</taxon>
        <taxon>Gammaproteobacteria</taxon>
        <taxon>Moraxellales</taxon>
        <taxon>Moraxellaceae</taxon>
        <taxon>Acinetobacter</taxon>
        <taxon>Acinetobacter calcoaceticus/baumannii complex</taxon>
    </lineage>
</organism>
<accession>B2HZA7</accession>
<feature type="chain" id="PRO_1000121938" description="Chromosomal replication initiator protein DnaA">
    <location>
        <begin position="1"/>
        <end position="465"/>
    </location>
</feature>
<feature type="region of interest" description="Domain I, interacts with DnaA modulators" evidence="1">
    <location>
        <begin position="1"/>
        <end position="87"/>
    </location>
</feature>
<feature type="region of interest" description="Disordered" evidence="2">
    <location>
        <begin position="81"/>
        <end position="123"/>
    </location>
</feature>
<feature type="region of interest" description="Domain II" evidence="1">
    <location>
        <begin position="88"/>
        <end position="127"/>
    </location>
</feature>
<feature type="region of interest" description="Domain III, AAA+ region" evidence="1">
    <location>
        <begin position="128"/>
        <end position="345"/>
    </location>
</feature>
<feature type="region of interest" description="Domain IV, binds dsDNA" evidence="1">
    <location>
        <begin position="346"/>
        <end position="465"/>
    </location>
</feature>
<feature type="compositionally biased region" description="Low complexity" evidence="2">
    <location>
        <begin position="88"/>
        <end position="100"/>
    </location>
</feature>
<feature type="binding site" evidence="1">
    <location>
        <position position="173"/>
    </location>
    <ligand>
        <name>ATP</name>
        <dbReference type="ChEBI" id="CHEBI:30616"/>
    </ligand>
</feature>
<feature type="binding site" evidence="1">
    <location>
        <position position="175"/>
    </location>
    <ligand>
        <name>ATP</name>
        <dbReference type="ChEBI" id="CHEBI:30616"/>
    </ligand>
</feature>
<feature type="binding site" evidence="1">
    <location>
        <position position="176"/>
    </location>
    <ligand>
        <name>ATP</name>
        <dbReference type="ChEBI" id="CHEBI:30616"/>
    </ligand>
</feature>
<feature type="binding site" evidence="1">
    <location>
        <position position="177"/>
    </location>
    <ligand>
        <name>ATP</name>
        <dbReference type="ChEBI" id="CHEBI:30616"/>
    </ligand>
</feature>
<name>DNAA_ACIBC</name>
<sequence>MLWTDCLTRLRQELSDNVFAMWIRPLVAEEVEGILRLYAPNPYWTRYIQENHLELISILAEQLSEGRVRQVEILVDSRPGSILSSSEQPATTTAALQTAPIPQPAKVKREPEPVANTAVSSKSSKKKLLNPQFTFSLFVEGRSNQMAAETCRKVLTQLGASQHNPLFLYGPTGLGKTHLMQAVGNALLQAKPNARVMYMTSESFVQDFVSSLQKGKVEEFKKNCRSLDLLLVDDIHLLAGKEASLVEFFYTFNALLDESKQIILTSDRYPKELTELDPRLVSRFSWGLSVGVEPPDIETRIEILLKKAENSGVDLPRNCALFIAQQVVANVRELEGALNKVVAISRFKGAPIDLDVVRESLKDVLAIRARTISVENIQRVVSEYFRIPLKELVGPKRTRIYARPRQLAMGLARELTGDSFPEIGMAFGGRDHSTVMHACEKVVSLREEDPIFDEDYKNLLRLLQS</sequence>
<dbReference type="EMBL" id="CP000863">
    <property type="protein sequence ID" value="ACC55317.1"/>
    <property type="molecule type" value="Genomic_DNA"/>
</dbReference>
<dbReference type="RefSeq" id="WP_000964768.1">
    <property type="nucleotide sequence ID" value="NZ_CP031380.1"/>
</dbReference>
<dbReference type="SMR" id="B2HZA7"/>
<dbReference type="GeneID" id="92891940"/>
<dbReference type="KEGG" id="abc:ACICU_00005"/>
<dbReference type="HOGENOM" id="CLU_026910_0_1_6"/>
<dbReference type="Proteomes" id="UP000008839">
    <property type="component" value="Chromosome"/>
</dbReference>
<dbReference type="GO" id="GO:0005737">
    <property type="term" value="C:cytoplasm"/>
    <property type="evidence" value="ECO:0007669"/>
    <property type="project" value="UniProtKB-SubCell"/>
</dbReference>
<dbReference type="GO" id="GO:0005886">
    <property type="term" value="C:plasma membrane"/>
    <property type="evidence" value="ECO:0007669"/>
    <property type="project" value="TreeGrafter"/>
</dbReference>
<dbReference type="GO" id="GO:0005524">
    <property type="term" value="F:ATP binding"/>
    <property type="evidence" value="ECO:0007669"/>
    <property type="project" value="UniProtKB-UniRule"/>
</dbReference>
<dbReference type="GO" id="GO:0016887">
    <property type="term" value="F:ATP hydrolysis activity"/>
    <property type="evidence" value="ECO:0007669"/>
    <property type="project" value="InterPro"/>
</dbReference>
<dbReference type="GO" id="GO:0003688">
    <property type="term" value="F:DNA replication origin binding"/>
    <property type="evidence" value="ECO:0007669"/>
    <property type="project" value="UniProtKB-UniRule"/>
</dbReference>
<dbReference type="GO" id="GO:0008289">
    <property type="term" value="F:lipid binding"/>
    <property type="evidence" value="ECO:0007669"/>
    <property type="project" value="UniProtKB-KW"/>
</dbReference>
<dbReference type="GO" id="GO:0006270">
    <property type="term" value="P:DNA replication initiation"/>
    <property type="evidence" value="ECO:0007669"/>
    <property type="project" value="UniProtKB-UniRule"/>
</dbReference>
<dbReference type="GO" id="GO:0006275">
    <property type="term" value="P:regulation of DNA replication"/>
    <property type="evidence" value="ECO:0007669"/>
    <property type="project" value="UniProtKB-UniRule"/>
</dbReference>
<dbReference type="CDD" id="cd00009">
    <property type="entry name" value="AAA"/>
    <property type="match status" value="1"/>
</dbReference>
<dbReference type="CDD" id="cd06571">
    <property type="entry name" value="Bac_DnaA_C"/>
    <property type="match status" value="1"/>
</dbReference>
<dbReference type="FunFam" id="1.10.8.60:FF:000003">
    <property type="entry name" value="Chromosomal replication initiator protein DnaA"/>
    <property type="match status" value="1"/>
</dbReference>
<dbReference type="FunFam" id="3.40.50.300:FF:000668">
    <property type="entry name" value="Chromosomal replication initiator protein DnaA"/>
    <property type="match status" value="1"/>
</dbReference>
<dbReference type="Gene3D" id="1.10.1750.10">
    <property type="match status" value="1"/>
</dbReference>
<dbReference type="Gene3D" id="1.10.8.60">
    <property type="match status" value="1"/>
</dbReference>
<dbReference type="Gene3D" id="3.30.300.180">
    <property type="match status" value="1"/>
</dbReference>
<dbReference type="Gene3D" id="3.40.50.300">
    <property type="entry name" value="P-loop containing nucleotide triphosphate hydrolases"/>
    <property type="match status" value="1"/>
</dbReference>
<dbReference type="HAMAP" id="MF_00377">
    <property type="entry name" value="DnaA_bact"/>
    <property type="match status" value="1"/>
</dbReference>
<dbReference type="InterPro" id="IPR003593">
    <property type="entry name" value="AAA+_ATPase"/>
</dbReference>
<dbReference type="InterPro" id="IPR001957">
    <property type="entry name" value="Chromosome_initiator_DnaA"/>
</dbReference>
<dbReference type="InterPro" id="IPR020591">
    <property type="entry name" value="Chromosome_initiator_DnaA-like"/>
</dbReference>
<dbReference type="InterPro" id="IPR018312">
    <property type="entry name" value="Chromosome_initiator_DnaA_CS"/>
</dbReference>
<dbReference type="InterPro" id="IPR013159">
    <property type="entry name" value="DnaA_C"/>
</dbReference>
<dbReference type="InterPro" id="IPR013317">
    <property type="entry name" value="DnaA_dom"/>
</dbReference>
<dbReference type="InterPro" id="IPR024633">
    <property type="entry name" value="DnaA_N_dom"/>
</dbReference>
<dbReference type="InterPro" id="IPR038454">
    <property type="entry name" value="DnaA_N_sf"/>
</dbReference>
<dbReference type="InterPro" id="IPR027417">
    <property type="entry name" value="P-loop_NTPase"/>
</dbReference>
<dbReference type="InterPro" id="IPR010921">
    <property type="entry name" value="Trp_repressor/repl_initiator"/>
</dbReference>
<dbReference type="NCBIfam" id="TIGR00362">
    <property type="entry name" value="DnaA"/>
    <property type="match status" value="1"/>
</dbReference>
<dbReference type="PANTHER" id="PTHR30050">
    <property type="entry name" value="CHROMOSOMAL REPLICATION INITIATOR PROTEIN DNAA"/>
    <property type="match status" value="1"/>
</dbReference>
<dbReference type="PANTHER" id="PTHR30050:SF2">
    <property type="entry name" value="CHROMOSOMAL REPLICATION INITIATOR PROTEIN DNAA"/>
    <property type="match status" value="1"/>
</dbReference>
<dbReference type="Pfam" id="PF00308">
    <property type="entry name" value="Bac_DnaA"/>
    <property type="match status" value="1"/>
</dbReference>
<dbReference type="Pfam" id="PF08299">
    <property type="entry name" value="Bac_DnaA_C"/>
    <property type="match status" value="1"/>
</dbReference>
<dbReference type="Pfam" id="PF11638">
    <property type="entry name" value="DnaA_N"/>
    <property type="match status" value="1"/>
</dbReference>
<dbReference type="PRINTS" id="PR00051">
    <property type="entry name" value="DNAA"/>
</dbReference>
<dbReference type="SMART" id="SM00382">
    <property type="entry name" value="AAA"/>
    <property type="match status" value="1"/>
</dbReference>
<dbReference type="SMART" id="SM00760">
    <property type="entry name" value="Bac_DnaA_C"/>
    <property type="match status" value="1"/>
</dbReference>
<dbReference type="SUPFAM" id="SSF52540">
    <property type="entry name" value="P-loop containing nucleoside triphosphate hydrolases"/>
    <property type="match status" value="1"/>
</dbReference>
<dbReference type="SUPFAM" id="SSF48295">
    <property type="entry name" value="TrpR-like"/>
    <property type="match status" value="1"/>
</dbReference>
<dbReference type="PROSITE" id="PS01008">
    <property type="entry name" value="DNAA"/>
    <property type="match status" value="1"/>
</dbReference>
<evidence type="ECO:0000255" key="1">
    <source>
        <dbReference type="HAMAP-Rule" id="MF_00377"/>
    </source>
</evidence>
<evidence type="ECO:0000256" key="2">
    <source>
        <dbReference type="SAM" id="MobiDB-lite"/>
    </source>
</evidence>
<proteinExistence type="inferred from homology"/>
<gene>
    <name evidence="1" type="primary">dnaA</name>
    <name type="ordered locus">ACICU_00005</name>
</gene>
<keyword id="KW-0067">ATP-binding</keyword>
<keyword id="KW-0963">Cytoplasm</keyword>
<keyword id="KW-0235">DNA replication</keyword>
<keyword id="KW-0238">DNA-binding</keyword>
<keyword id="KW-0446">Lipid-binding</keyword>
<keyword id="KW-0547">Nucleotide-binding</keyword>
<reference key="1">
    <citation type="journal article" date="2008" name="Antimicrob. Agents Chemother.">
        <title>Whole-genome pyrosequencing of an epidemic multidrug-resistant Acinetobacter baumannii strain belonging to the European clone II group.</title>
        <authorList>
            <person name="Iacono M."/>
            <person name="Villa L."/>
            <person name="Fortini D."/>
            <person name="Bordoni R."/>
            <person name="Imperi F."/>
            <person name="Bonnal R.J."/>
            <person name="Sicheritz-Ponten T."/>
            <person name="De Bellis G."/>
            <person name="Visca P."/>
            <person name="Cassone A."/>
            <person name="Carattoli A."/>
        </authorList>
    </citation>
    <scope>NUCLEOTIDE SEQUENCE [LARGE SCALE GENOMIC DNA]</scope>
    <source>
        <strain>ACICU</strain>
    </source>
</reference>
<comment type="function">
    <text evidence="1">Plays an essential role in the initiation and regulation of chromosomal replication. ATP-DnaA binds to the origin of replication (oriC) to initiate formation of the DNA replication initiation complex once per cell cycle. Binds the DnaA box (a 9 base pair repeat at the origin) and separates the double-stranded (ds)DNA. Forms a right-handed helical filament on oriC DNA; dsDNA binds to the exterior of the filament while single-stranded (ss)DNA is stabiized in the filament's interior. The ATP-DnaA-oriC complex binds and stabilizes one strand of the AT-rich DNA unwinding element (DUE), permitting loading of DNA polymerase. After initiation quickly degrades to an ADP-DnaA complex that is not apt for DNA replication. Binds acidic phospholipids.</text>
</comment>
<comment type="subunit">
    <text evidence="1">Oligomerizes as a right-handed, spiral filament on DNA at oriC.</text>
</comment>
<comment type="subcellular location">
    <subcellularLocation>
        <location evidence="1">Cytoplasm</location>
    </subcellularLocation>
</comment>
<comment type="domain">
    <text evidence="1">Domain I is involved in oligomerization and binding regulators, domain II is flexibile and of varying length in different bacteria, domain III forms the AAA+ region, while domain IV binds dsDNA.</text>
</comment>
<comment type="similarity">
    <text evidence="1">Belongs to the DnaA family.</text>
</comment>